<keyword id="KW-1003">Cell membrane</keyword>
<keyword id="KW-0472">Membrane</keyword>
<keyword id="KW-1185">Reference proteome</keyword>
<keyword id="KW-0812">Transmembrane</keyword>
<keyword id="KW-1133">Transmembrane helix</keyword>
<comment type="subcellular location">
    <subcellularLocation>
        <location evidence="2">Cell membrane</location>
        <topology evidence="2">Single-pass membrane protein</topology>
    </subcellularLocation>
</comment>
<reference key="1">
    <citation type="submission" date="1997-11" db="EMBL/GenBank/DDBJ databases">
        <title>Nucleotide sequence of the 300-304 chromosomal segment of Bacillus subtilis.</title>
        <authorList>
            <person name="Lazarevic V."/>
            <person name="Soldo B."/>
            <person name="Rivolta C."/>
            <person name="Reynolds S."/>
            <person name="Mauel C."/>
            <person name="Karamata D."/>
        </authorList>
    </citation>
    <scope>NUCLEOTIDE SEQUENCE [GENOMIC DNA]</scope>
</reference>
<reference key="2">
    <citation type="journal article" date="1997" name="Nature">
        <title>The complete genome sequence of the Gram-positive bacterium Bacillus subtilis.</title>
        <authorList>
            <person name="Kunst F."/>
            <person name="Ogasawara N."/>
            <person name="Moszer I."/>
            <person name="Albertini A.M."/>
            <person name="Alloni G."/>
            <person name="Azevedo V."/>
            <person name="Bertero M.G."/>
            <person name="Bessieres P."/>
            <person name="Bolotin A."/>
            <person name="Borchert S."/>
            <person name="Borriss R."/>
            <person name="Boursier L."/>
            <person name="Brans A."/>
            <person name="Braun M."/>
            <person name="Brignell S.C."/>
            <person name="Bron S."/>
            <person name="Brouillet S."/>
            <person name="Bruschi C.V."/>
            <person name="Caldwell B."/>
            <person name="Capuano V."/>
            <person name="Carter N.M."/>
            <person name="Choi S.-K."/>
            <person name="Codani J.-J."/>
            <person name="Connerton I.F."/>
            <person name="Cummings N.J."/>
            <person name="Daniel R.A."/>
            <person name="Denizot F."/>
            <person name="Devine K.M."/>
            <person name="Duesterhoeft A."/>
            <person name="Ehrlich S.D."/>
            <person name="Emmerson P.T."/>
            <person name="Entian K.-D."/>
            <person name="Errington J."/>
            <person name="Fabret C."/>
            <person name="Ferrari E."/>
            <person name="Foulger D."/>
            <person name="Fritz C."/>
            <person name="Fujita M."/>
            <person name="Fujita Y."/>
            <person name="Fuma S."/>
            <person name="Galizzi A."/>
            <person name="Galleron N."/>
            <person name="Ghim S.-Y."/>
            <person name="Glaser P."/>
            <person name="Goffeau A."/>
            <person name="Golightly E.J."/>
            <person name="Grandi G."/>
            <person name="Guiseppi G."/>
            <person name="Guy B.J."/>
            <person name="Haga K."/>
            <person name="Haiech J."/>
            <person name="Harwood C.R."/>
            <person name="Henaut A."/>
            <person name="Hilbert H."/>
            <person name="Holsappel S."/>
            <person name="Hosono S."/>
            <person name="Hullo M.-F."/>
            <person name="Itaya M."/>
            <person name="Jones L.-M."/>
            <person name="Joris B."/>
            <person name="Karamata D."/>
            <person name="Kasahara Y."/>
            <person name="Klaerr-Blanchard M."/>
            <person name="Klein C."/>
            <person name="Kobayashi Y."/>
            <person name="Koetter P."/>
            <person name="Koningstein G."/>
            <person name="Krogh S."/>
            <person name="Kumano M."/>
            <person name="Kurita K."/>
            <person name="Lapidus A."/>
            <person name="Lardinois S."/>
            <person name="Lauber J."/>
            <person name="Lazarevic V."/>
            <person name="Lee S.-M."/>
            <person name="Levine A."/>
            <person name="Liu H."/>
            <person name="Masuda S."/>
            <person name="Mauel C."/>
            <person name="Medigue C."/>
            <person name="Medina N."/>
            <person name="Mellado R.P."/>
            <person name="Mizuno M."/>
            <person name="Moestl D."/>
            <person name="Nakai S."/>
            <person name="Noback M."/>
            <person name="Noone D."/>
            <person name="O'Reilly M."/>
            <person name="Ogawa K."/>
            <person name="Ogiwara A."/>
            <person name="Oudega B."/>
            <person name="Park S.-H."/>
            <person name="Parro V."/>
            <person name="Pohl T.M."/>
            <person name="Portetelle D."/>
            <person name="Porwollik S."/>
            <person name="Prescott A.M."/>
            <person name="Presecan E."/>
            <person name="Pujic P."/>
            <person name="Purnelle B."/>
            <person name="Rapoport G."/>
            <person name="Rey M."/>
            <person name="Reynolds S."/>
            <person name="Rieger M."/>
            <person name="Rivolta C."/>
            <person name="Rocha E."/>
            <person name="Roche B."/>
            <person name="Rose M."/>
            <person name="Sadaie Y."/>
            <person name="Sato T."/>
            <person name="Scanlan E."/>
            <person name="Schleich S."/>
            <person name="Schroeter R."/>
            <person name="Scoffone F."/>
            <person name="Sekiguchi J."/>
            <person name="Sekowska A."/>
            <person name="Seror S.J."/>
            <person name="Serror P."/>
            <person name="Shin B.-S."/>
            <person name="Soldo B."/>
            <person name="Sorokin A."/>
            <person name="Tacconi E."/>
            <person name="Takagi T."/>
            <person name="Takahashi H."/>
            <person name="Takemaru K."/>
            <person name="Takeuchi M."/>
            <person name="Tamakoshi A."/>
            <person name="Tanaka T."/>
            <person name="Terpstra P."/>
            <person name="Tognoni A."/>
            <person name="Tosato V."/>
            <person name="Uchiyama S."/>
            <person name="Vandenbol M."/>
            <person name="Vannier F."/>
            <person name="Vassarotti A."/>
            <person name="Viari A."/>
            <person name="Wambutt R."/>
            <person name="Wedler E."/>
            <person name="Wedler H."/>
            <person name="Weitzenegger T."/>
            <person name="Winters P."/>
            <person name="Wipat A."/>
            <person name="Yamamoto H."/>
            <person name="Yamane K."/>
            <person name="Yasumoto K."/>
            <person name="Yata K."/>
            <person name="Yoshida K."/>
            <person name="Yoshikawa H.-F."/>
            <person name="Zumstein E."/>
            <person name="Yoshikawa H."/>
            <person name="Danchin A."/>
        </authorList>
    </citation>
    <scope>NUCLEOTIDE SEQUENCE [LARGE SCALE GENOMIC DNA]</scope>
    <source>
        <strain>168</strain>
    </source>
</reference>
<protein>
    <recommendedName>
        <fullName>Uncharacterized membrane protein YvlC</fullName>
    </recommendedName>
</protein>
<sequence>MNKLYRSEKNKKIAGVIGGLAEYFNWDASLLRVITVILAIMTSVLPVLLIYIIWIFIVPSERDMK</sequence>
<evidence type="ECO:0000255" key="1"/>
<evidence type="ECO:0000305" key="2"/>
<feature type="chain" id="PRO_0000389643" description="Uncharacterized membrane protein YvlC">
    <location>
        <begin position="1"/>
        <end position="65"/>
    </location>
</feature>
<feature type="transmembrane region" description="Helical" evidence="1">
    <location>
        <begin position="37"/>
        <end position="57"/>
    </location>
</feature>
<gene>
    <name type="primary">yvlC</name>
    <name type="ordered locus">BSU35110</name>
</gene>
<organism>
    <name type="scientific">Bacillus subtilis (strain 168)</name>
    <dbReference type="NCBI Taxonomy" id="224308"/>
    <lineage>
        <taxon>Bacteria</taxon>
        <taxon>Bacillati</taxon>
        <taxon>Bacillota</taxon>
        <taxon>Bacilli</taxon>
        <taxon>Bacillales</taxon>
        <taxon>Bacillaceae</taxon>
        <taxon>Bacillus</taxon>
    </lineage>
</organism>
<dbReference type="EMBL" id="AF017113">
    <property type="protein sequence ID" value="AAC67275.1"/>
    <property type="molecule type" value="Genomic_DNA"/>
</dbReference>
<dbReference type="EMBL" id="AL009126">
    <property type="protein sequence ID" value="CAB15516.1"/>
    <property type="molecule type" value="Genomic_DNA"/>
</dbReference>
<dbReference type="PIR" id="E70043">
    <property type="entry name" value="E70043"/>
</dbReference>
<dbReference type="RefSeq" id="NP_391391.1">
    <property type="nucleotide sequence ID" value="NC_000964.3"/>
</dbReference>
<dbReference type="RefSeq" id="WP_003228065.1">
    <property type="nucleotide sequence ID" value="NZ_OZ025638.1"/>
</dbReference>
<dbReference type="SMR" id="O34719"/>
<dbReference type="FunCoup" id="O34719">
    <property type="interactions" value="2"/>
</dbReference>
<dbReference type="STRING" id="224308.BSU35110"/>
<dbReference type="PaxDb" id="224308-BSU35110"/>
<dbReference type="EnsemblBacteria" id="CAB15516">
    <property type="protein sequence ID" value="CAB15516"/>
    <property type="gene ID" value="BSU_35110"/>
</dbReference>
<dbReference type="GeneID" id="936642"/>
<dbReference type="KEGG" id="bsu:BSU35110"/>
<dbReference type="PATRIC" id="fig|224308.179.peg.3801"/>
<dbReference type="eggNOG" id="COG1983">
    <property type="taxonomic scope" value="Bacteria"/>
</dbReference>
<dbReference type="InParanoid" id="O34719"/>
<dbReference type="OrthoDB" id="9815286at2"/>
<dbReference type="PhylomeDB" id="O34719"/>
<dbReference type="BioCyc" id="BSUB:BSU35110-MONOMER"/>
<dbReference type="Proteomes" id="UP000001570">
    <property type="component" value="Chromosome"/>
</dbReference>
<dbReference type="GO" id="GO:0005886">
    <property type="term" value="C:plasma membrane"/>
    <property type="evidence" value="ECO:0000318"/>
    <property type="project" value="GO_Central"/>
</dbReference>
<dbReference type="InterPro" id="IPR007168">
    <property type="entry name" value="Phageshock_PspC_N"/>
</dbReference>
<dbReference type="InterPro" id="IPR052027">
    <property type="entry name" value="PspC"/>
</dbReference>
<dbReference type="PANTHER" id="PTHR33885">
    <property type="entry name" value="PHAGE SHOCK PROTEIN C"/>
    <property type="match status" value="1"/>
</dbReference>
<dbReference type="PANTHER" id="PTHR33885:SF3">
    <property type="entry name" value="PHAGE SHOCK PROTEIN C"/>
    <property type="match status" value="1"/>
</dbReference>
<dbReference type="Pfam" id="PF04024">
    <property type="entry name" value="PspC"/>
    <property type="match status" value="1"/>
</dbReference>
<name>YVLC_BACSU</name>
<proteinExistence type="predicted"/>
<accession>O34719</accession>
<accession>Q795E3</accession>